<evidence type="ECO:0000255" key="1">
    <source>
        <dbReference type="HAMAP-Rule" id="MF_00555"/>
    </source>
</evidence>
<comment type="catalytic activity">
    <reaction evidence="1">
        <text>L-aspartate + NH4(+) + ATP = L-asparagine + AMP + diphosphate + H(+)</text>
        <dbReference type="Rhea" id="RHEA:11372"/>
        <dbReference type="ChEBI" id="CHEBI:15378"/>
        <dbReference type="ChEBI" id="CHEBI:28938"/>
        <dbReference type="ChEBI" id="CHEBI:29991"/>
        <dbReference type="ChEBI" id="CHEBI:30616"/>
        <dbReference type="ChEBI" id="CHEBI:33019"/>
        <dbReference type="ChEBI" id="CHEBI:58048"/>
        <dbReference type="ChEBI" id="CHEBI:456215"/>
        <dbReference type="EC" id="6.3.1.1"/>
    </reaction>
</comment>
<comment type="pathway">
    <text evidence="1">Amino-acid biosynthesis; L-asparagine biosynthesis; L-asparagine from L-aspartate (ammonia route): step 1/1.</text>
</comment>
<comment type="subcellular location">
    <subcellularLocation>
        <location evidence="1">Cytoplasm</location>
    </subcellularLocation>
</comment>
<comment type="similarity">
    <text evidence="1">Belongs to the class-II aminoacyl-tRNA synthetase family. AsnA subfamily.</text>
</comment>
<gene>
    <name evidence="1" type="primary">asnA</name>
    <name type="ordered locus">NT01EI_3900</name>
</gene>
<sequence>MKKSYIEKQQQISFVKAHFSRQLEQRLGLIEVQAPILSRLGDGTQDNLSGHEKAVQVKVKNLPQDAFEVVHSLAKWKRKTLGMYDFAPGEGLYTHMKALRPDEDRLSAIHSVYVDQWDWERVMGDGERTPAYLQETVRHIYAAMKTTEAEVCAQYGLTPFLPAEIHFIHSEALLRRYPDLDAKGRERAITHELGAVFLIGIGGRLSNGQAHDVRAPDYDDWTSLGAEGFGGLNGDILVWNPVLGDAFELSSMGIRVDAKALKRQLALTDDEDRLALEWHQSLLRGDMPQTIGGGIGQSRLVMLLLQQQHIGQVQCGVWPQEIRQRVQAIL</sequence>
<feature type="chain" id="PRO_1000212013" description="Aspartate--ammonia ligase">
    <location>
        <begin position="1"/>
        <end position="330"/>
    </location>
</feature>
<accession>C5BDG9</accession>
<name>ASNA_EDWI9</name>
<dbReference type="EC" id="6.3.1.1" evidence="1"/>
<dbReference type="EMBL" id="CP001600">
    <property type="protein sequence ID" value="ACR71011.1"/>
    <property type="molecule type" value="Genomic_DNA"/>
</dbReference>
<dbReference type="RefSeq" id="WP_015873041.1">
    <property type="nucleotide sequence ID" value="NZ_CP169062.1"/>
</dbReference>
<dbReference type="SMR" id="C5BDG9"/>
<dbReference type="STRING" id="67780.B6E78_11025"/>
<dbReference type="GeneID" id="69540716"/>
<dbReference type="KEGG" id="eic:NT01EI_3900"/>
<dbReference type="PATRIC" id="fig|634503.3.peg.3471"/>
<dbReference type="HOGENOM" id="CLU_071543_0_0_6"/>
<dbReference type="OrthoDB" id="3185462at2"/>
<dbReference type="UniPathway" id="UPA00134">
    <property type="reaction ID" value="UER00194"/>
</dbReference>
<dbReference type="Proteomes" id="UP000001485">
    <property type="component" value="Chromosome"/>
</dbReference>
<dbReference type="GO" id="GO:0005829">
    <property type="term" value="C:cytosol"/>
    <property type="evidence" value="ECO:0007669"/>
    <property type="project" value="TreeGrafter"/>
</dbReference>
<dbReference type="GO" id="GO:0004071">
    <property type="term" value="F:aspartate-ammonia ligase activity"/>
    <property type="evidence" value="ECO:0007669"/>
    <property type="project" value="UniProtKB-UniRule"/>
</dbReference>
<dbReference type="GO" id="GO:0005524">
    <property type="term" value="F:ATP binding"/>
    <property type="evidence" value="ECO:0007669"/>
    <property type="project" value="UniProtKB-UniRule"/>
</dbReference>
<dbReference type="GO" id="GO:0070981">
    <property type="term" value="P:L-asparagine biosynthetic process"/>
    <property type="evidence" value="ECO:0007669"/>
    <property type="project" value="UniProtKB-UniRule"/>
</dbReference>
<dbReference type="Gene3D" id="3.30.930.10">
    <property type="entry name" value="Bira Bifunctional Protein, Domain 2"/>
    <property type="match status" value="1"/>
</dbReference>
<dbReference type="HAMAP" id="MF_00555">
    <property type="entry name" value="AsnA"/>
    <property type="match status" value="1"/>
</dbReference>
<dbReference type="InterPro" id="IPR006195">
    <property type="entry name" value="aa-tRNA-synth_II"/>
</dbReference>
<dbReference type="InterPro" id="IPR045864">
    <property type="entry name" value="aa-tRNA-synth_II/BPL/LPL"/>
</dbReference>
<dbReference type="InterPro" id="IPR004618">
    <property type="entry name" value="AsnA"/>
</dbReference>
<dbReference type="NCBIfam" id="TIGR00669">
    <property type="entry name" value="asnA"/>
    <property type="match status" value="1"/>
</dbReference>
<dbReference type="PANTHER" id="PTHR30073">
    <property type="entry name" value="ASPARTATE--AMMONIA LIGASE"/>
    <property type="match status" value="1"/>
</dbReference>
<dbReference type="PANTHER" id="PTHR30073:SF5">
    <property type="entry name" value="ASPARTATE--AMMONIA LIGASE"/>
    <property type="match status" value="1"/>
</dbReference>
<dbReference type="Pfam" id="PF03590">
    <property type="entry name" value="AsnA"/>
    <property type="match status" value="1"/>
</dbReference>
<dbReference type="PIRSF" id="PIRSF001555">
    <property type="entry name" value="Asp_ammon_ligase"/>
    <property type="match status" value="1"/>
</dbReference>
<dbReference type="SUPFAM" id="SSF55681">
    <property type="entry name" value="Class II aaRS and biotin synthetases"/>
    <property type="match status" value="1"/>
</dbReference>
<dbReference type="PROSITE" id="PS50862">
    <property type="entry name" value="AA_TRNA_LIGASE_II"/>
    <property type="match status" value="1"/>
</dbReference>
<organism>
    <name type="scientific">Edwardsiella ictaluri (strain 93-146)</name>
    <dbReference type="NCBI Taxonomy" id="634503"/>
    <lineage>
        <taxon>Bacteria</taxon>
        <taxon>Pseudomonadati</taxon>
        <taxon>Pseudomonadota</taxon>
        <taxon>Gammaproteobacteria</taxon>
        <taxon>Enterobacterales</taxon>
        <taxon>Hafniaceae</taxon>
        <taxon>Edwardsiella</taxon>
    </lineage>
</organism>
<keyword id="KW-0028">Amino-acid biosynthesis</keyword>
<keyword id="KW-0061">Asparagine biosynthesis</keyword>
<keyword id="KW-0067">ATP-binding</keyword>
<keyword id="KW-0963">Cytoplasm</keyword>
<keyword id="KW-0436">Ligase</keyword>
<keyword id="KW-0547">Nucleotide-binding</keyword>
<proteinExistence type="inferred from homology"/>
<reference key="1">
    <citation type="submission" date="2009-03" db="EMBL/GenBank/DDBJ databases">
        <title>Complete genome sequence of Edwardsiella ictaluri 93-146.</title>
        <authorList>
            <person name="Williams M.L."/>
            <person name="Gillaspy A.F."/>
            <person name="Dyer D.W."/>
            <person name="Thune R.L."/>
            <person name="Waldbieser G.C."/>
            <person name="Schuster S.C."/>
            <person name="Gipson J."/>
            <person name="Zaitshik J."/>
            <person name="Landry C."/>
            <person name="Lawrence M.L."/>
        </authorList>
    </citation>
    <scope>NUCLEOTIDE SEQUENCE [LARGE SCALE GENOMIC DNA]</scope>
    <source>
        <strain>93-146</strain>
    </source>
</reference>
<protein>
    <recommendedName>
        <fullName evidence="1">Aspartate--ammonia ligase</fullName>
        <ecNumber evidence="1">6.3.1.1</ecNumber>
    </recommendedName>
    <alternativeName>
        <fullName evidence="1">Asparagine synthetase A</fullName>
    </alternativeName>
</protein>